<name>DDL_PASMU</name>
<feature type="chain" id="PRO_0000177849" description="D-alanine--D-alanine ligase">
    <location>
        <begin position="1"/>
        <end position="309"/>
    </location>
</feature>
<feature type="domain" description="ATP-grasp" evidence="2">
    <location>
        <begin position="106"/>
        <end position="305"/>
    </location>
</feature>
<feature type="binding site" evidence="2">
    <location>
        <begin position="136"/>
        <end position="191"/>
    </location>
    <ligand>
        <name>ATP</name>
        <dbReference type="ChEBI" id="CHEBI:30616"/>
    </ligand>
</feature>
<feature type="binding site" evidence="2">
    <location>
        <position position="259"/>
    </location>
    <ligand>
        <name>Mg(2+)</name>
        <dbReference type="ChEBI" id="CHEBI:18420"/>
        <label>1</label>
    </ligand>
</feature>
<feature type="binding site" evidence="2">
    <location>
        <position position="272"/>
    </location>
    <ligand>
        <name>Mg(2+)</name>
        <dbReference type="ChEBI" id="CHEBI:18420"/>
        <label>1</label>
    </ligand>
</feature>
<feature type="binding site" evidence="2">
    <location>
        <position position="272"/>
    </location>
    <ligand>
        <name>Mg(2+)</name>
        <dbReference type="ChEBI" id="CHEBI:18420"/>
        <label>2</label>
    </ligand>
</feature>
<feature type="binding site" evidence="2">
    <location>
        <position position="274"/>
    </location>
    <ligand>
        <name>Mg(2+)</name>
        <dbReference type="ChEBI" id="CHEBI:18420"/>
        <label>2</label>
    </ligand>
</feature>
<evidence type="ECO:0000250" key="1"/>
<evidence type="ECO:0000255" key="2">
    <source>
        <dbReference type="HAMAP-Rule" id="MF_00047"/>
    </source>
</evidence>
<reference key="1">
    <citation type="journal article" date="2001" name="Proc. Natl. Acad. Sci. U.S.A.">
        <title>Complete genomic sequence of Pasteurella multocida Pm70.</title>
        <authorList>
            <person name="May B.J."/>
            <person name="Zhang Q."/>
            <person name="Li L.L."/>
            <person name="Paustian M.L."/>
            <person name="Whittam T.S."/>
            <person name="Kapur V."/>
        </authorList>
    </citation>
    <scope>NUCLEOTIDE SEQUENCE [LARGE SCALE GENOMIC DNA]</scope>
    <source>
        <strain>Pm70</strain>
    </source>
</reference>
<organism>
    <name type="scientific">Pasteurella multocida (strain Pm70)</name>
    <dbReference type="NCBI Taxonomy" id="272843"/>
    <lineage>
        <taxon>Bacteria</taxon>
        <taxon>Pseudomonadati</taxon>
        <taxon>Pseudomonadota</taxon>
        <taxon>Gammaproteobacteria</taxon>
        <taxon>Pasteurellales</taxon>
        <taxon>Pasteurellaceae</taxon>
        <taxon>Pasteurella</taxon>
    </lineage>
</organism>
<comment type="function">
    <text evidence="2">Cell wall formation.</text>
</comment>
<comment type="catalytic activity">
    <reaction evidence="2">
        <text>2 D-alanine + ATP = D-alanyl-D-alanine + ADP + phosphate + H(+)</text>
        <dbReference type="Rhea" id="RHEA:11224"/>
        <dbReference type="ChEBI" id="CHEBI:15378"/>
        <dbReference type="ChEBI" id="CHEBI:30616"/>
        <dbReference type="ChEBI" id="CHEBI:43474"/>
        <dbReference type="ChEBI" id="CHEBI:57416"/>
        <dbReference type="ChEBI" id="CHEBI:57822"/>
        <dbReference type="ChEBI" id="CHEBI:456216"/>
        <dbReference type="EC" id="6.3.2.4"/>
    </reaction>
</comment>
<comment type="cofactor">
    <cofactor evidence="1">
        <name>Mg(2+)</name>
        <dbReference type="ChEBI" id="CHEBI:18420"/>
    </cofactor>
    <cofactor evidence="1">
        <name>Mn(2+)</name>
        <dbReference type="ChEBI" id="CHEBI:29035"/>
    </cofactor>
    <text evidence="1">Binds 2 magnesium or manganese ions per subunit.</text>
</comment>
<comment type="pathway">
    <text evidence="2">Cell wall biogenesis; peptidoglycan biosynthesis.</text>
</comment>
<comment type="subcellular location">
    <subcellularLocation>
        <location evidence="2">Cytoplasm</location>
    </subcellularLocation>
</comment>
<comment type="similarity">
    <text evidence="2">Belongs to the D-alanine--D-alanine ligase family.</text>
</comment>
<accession>P57819</accession>
<proteinExistence type="inferred from homology"/>
<gene>
    <name evidence="2" type="primary">ddl</name>
    <name type="synonym">ddlB</name>
    <name type="ordered locus">PM0144</name>
</gene>
<protein>
    <recommendedName>
        <fullName evidence="2">D-alanine--D-alanine ligase</fullName>
        <ecNumber evidence="2">6.3.2.4</ecNumber>
    </recommendedName>
    <alternativeName>
        <fullName evidence="2">D-Ala-D-Ala ligase</fullName>
    </alternativeName>
    <alternativeName>
        <fullName evidence="2">D-alanylalanine synthetase</fullName>
    </alternativeName>
</protein>
<keyword id="KW-0067">ATP-binding</keyword>
<keyword id="KW-0133">Cell shape</keyword>
<keyword id="KW-0961">Cell wall biogenesis/degradation</keyword>
<keyword id="KW-0963">Cytoplasm</keyword>
<keyword id="KW-0436">Ligase</keyword>
<keyword id="KW-0460">Magnesium</keyword>
<keyword id="KW-0464">Manganese</keyword>
<keyword id="KW-0479">Metal-binding</keyword>
<keyword id="KW-0547">Nucleotide-binding</keyword>
<keyword id="KW-0573">Peptidoglycan synthesis</keyword>
<keyword id="KW-1185">Reference proteome</keyword>
<sequence>MKKTLKQEKIAVLLGGTSAEREVSLDSGQAVLNALLSAGFDAHPIDPKTFPVATLKEQGFDRVFNILHGRGGEDGTMQGLLEQIGIPYTGCGVMTSALTMDKMRTKMLWKAFGLPVAEMEIVTKANVGELNPSAVVEKLGLPVMVKPSLEGSSVGLTKVKRVEDLKSAVDFALKYDDTVLIEEWLSGAEFTVPVLDNEVLPSIRIVPEGEFYDYEAKYISDNTQYFCPSGLSAEREDELKQLVKQAYDVVGCRGWSRIDVMLDGNDAFRLVEVNTNPGMTSHSLFPKSAATVGYSFEQLVVKILELSAE</sequence>
<dbReference type="EC" id="6.3.2.4" evidence="2"/>
<dbReference type="EMBL" id="AE004439">
    <property type="protein sequence ID" value="AAK02228.1"/>
    <property type="molecule type" value="Genomic_DNA"/>
</dbReference>
<dbReference type="RefSeq" id="WP_005723044.1">
    <property type="nucleotide sequence ID" value="NC_002663.1"/>
</dbReference>
<dbReference type="SMR" id="P57819"/>
<dbReference type="STRING" id="272843.PM0144"/>
<dbReference type="EnsemblBacteria" id="AAK02228">
    <property type="protein sequence ID" value="AAK02228"/>
    <property type="gene ID" value="PM0144"/>
</dbReference>
<dbReference type="KEGG" id="pmu:PM0144"/>
<dbReference type="HOGENOM" id="CLU_039268_1_2_6"/>
<dbReference type="OrthoDB" id="9813261at2"/>
<dbReference type="UniPathway" id="UPA00219"/>
<dbReference type="Proteomes" id="UP000000809">
    <property type="component" value="Chromosome"/>
</dbReference>
<dbReference type="GO" id="GO:0005829">
    <property type="term" value="C:cytosol"/>
    <property type="evidence" value="ECO:0007669"/>
    <property type="project" value="TreeGrafter"/>
</dbReference>
<dbReference type="GO" id="GO:0005524">
    <property type="term" value="F:ATP binding"/>
    <property type="evidence" value="ECO:0007669"/>
    <property type="project" value="UniProtKB-KW"/>
</dbReference>
<dbReference type="GO" id="GO:0008716">
    <property type="term" value="F:D-alanine-D-alanine ligase activity"/>
    <property type="evidence" value="ECO:0007669"/>
    <property type="project" value="UniProtKB-UniRule"/>
</dbReference>
<dbReference type="GO" id="GO:0046872">
    <property type="term" value="F:metal ion binding"/>
    <property type="evidence" value="ECO:0007669"/>
    <property type="project" value="UniProtKB-KW"/>
</dbReference>
<dbReference type="GO" id="GO:0071555">
    <property type="term" value="P:cell wall organization"/>
    <property type="evidence" value="ECO:0007669"/>
    <property type="project" value="UniProtKB-KW"/>
</dbReference>
<dbReference type="GO" id="GO:0009252">
    <property type="term" value="P:peptidoglycan biosynthetic process"/>
    <property type="evidence" value="ECO:0007669"/>
    <property type="project" value="UniProtKB-UniRule"/>
</dbReference>
<dbReference type="GO" id="GO:0008360">
    <property type="term" value="P:regulation of cell shape"/>
    <property type="evidence" value="ECO:0007669"/>
    <property type="project" value="UniProtKB-KW"/>
</dbReference>
<dbReference type="FunFam" id="3.30.1490.20:FF:000007">
    <property type="entry name" value="D-alanine--D-alanine ligase"/>
    <property type="match status" value="1"/>
</dbReference>
<dbReference type="FunFam" id="3.30.470.20:FF:000008">
    <property type="entry name" value="D-alanine--D-alanine ligase"/>
    <property type="match status" value="1"/>
</dbReference>
<dbReference type="FunFam" id="3.40.50.20:FF:000013">
    <property type="entry name" value="D-alanine--D-alanine ligase"/>
    <property type="match status" value="1"/>
</dbReference>
<dbReference type="Gene3D" id="3.40.50.20">
    <property type="match status" value="1"/>
</dbReference>
<dbReference type="Gene3D" id="3.30.1490.20">
    <property type="entry name" value="ATP-grasp fold, A domain"/>
    <property type="match status" value="1"/>
</dbReference>
<dbReference type="Gene3D" id="3.30.470.20">
    <property type="entry name" value="ATP-grasp fold, B domain"/>
    <property type="match status" value="1"/>
</dbReference>
<dbReference type="HAMAP" id="MF_00047">
    <property type="entry name" value="Dala_Dala_lig"/>
    <property type="match status" value="1"/>
</dbReference>
<dbReference type="InterPro" id="IPR011761">
    <property type="entry name" value="ATP-grasp"/>
</dbReference>
<dbReference type="InterPro" id="IPR013815">
    <property type="entry name" value="ATP_grasp_subdomain_1"/>
</dbReference>
<dbReference type="InterPro" id="IPR000291">
    <property type="entry name" value="D-Ala_lig_Van_CS"/>
</dbReference>
<dbReference type="InterPro" id="IPR005905">
    <property type="entry name" value="D_ala_D_ala"/>
</dbReference>
<dbReference type="InterPro" id="IPR011095">
    <property type="entry name" value="Dala_Dala_lig_C"/>
</dbReference>
<dbReference type="InterPro" id="IPR011127">
    <property type="entry name" value="Dala_Dala_lig_N"/>
</dbReference>
<dbReference type="InterPro" id="IPR016185">
    <property type="entry name" value="PreATP-grasp_dom_sf"/>
</dbReference>
<dbReference type="NCBIfam" id="TIGR01205">
    <property type="entry name" value="D_ala_D_alaTIGR"/>
    <property type="match status" value="1"/>
</dbReference>
<dbReference type="NCBIfam" id="NF002378">
    <property type="entry name" value="PRK01372.1"/>
    <property type="match status" value="1"/>
</dbReference>
<dbReference type="PANTHER" id="PTHR23132">
    <property type="entry name" value="D-ALANINE--D-ALANINE LIGASE"/>
    <property type="match status" value="1"/>
</dbReference>
<dbReference type="PANTHER" id="PTHR23132:SF23">
    <property type="entry name" value="D-ALANINE--D-ALANINE LIGASE B"/>
    <property type="match status" value="1"/>
</dbReference>
<dbReference type="Pfam" id="PF07478">
    <property type="entry name" value="Dala_Dala_lig_C"/>
    <property type="match status" value="1"/>
</dbReference>
<dbReference type="Pfam" id="PF01820">
    <property type="entry name" value="Dala_Dala_lig_N"/>
    <property type="match status" value="1"/>
</dbReference>
<dbReference type="PIRSF" id="PIRSF039102">
    <property type="entry name" value="Ddl/VanB"/>
    <property type="match status" value="1"/>
</dbReference>
<dbReference type="SUPFAM" id="SSF56059">
    <property type="entry name" value="Glutathione synthetase ATP-binding domain-like"/>
    <property type="match status" value="1"/>
</dbReference>
<dbReference type="SUPFAM" id="SSF52440">
    <property type="entry name" value="PreATP-grasp domain"/>
    <property type="match status" value="1"/>
</dbReference>
<dbReference type="PROSITE" id="PS50975">
    <property type="entry name" value="ATP_GRASP"/>
    <property type="match status" value="1"/>
</dbReference>
<dbReference type="PROSITE" id="PS00843">
    <property type="entry name" value="DALA_DALA_LIGASE_1"/>
    <property type="match status" value="1"/>
</dbReference>
<dbReference type="PROSITE" id="PS00844">
    <property type="entry name" value="DALA_DALA_LIGASE_2"/>
    <property type="match status" value="1"/>
</dbReference>